<organism>
    <name type="scientific">Helicobacter pylori (strain ATCC 700392 / 26695)</name>
    <name type="common">Campylobacter pylori</name>
    <dbReference type="NCBI Taxonomy" id="85962"/>
    <lineage>
        <taxon>Bacteria</taxon>
        <taxon>Pseudomonadati</taxon>
        <taxon>Campylobacterota</taxon>
        <taxon>Epsilonproteobacteria</taxon>
        <taxon>Campylobacterales</taxon>
        <taxon>Helicobacteraceae</taxon>
        <taxon>Helicobacter</taxon>
    </lineage>
</organism>
<accession>O25918</accession>
<name>CRDR_HELPY</name>
<gene>
    <name evidence="5" type="primary">crdR</name>
    <name type="ordered locus">HP_1365</name>
</gene>
<dbReference type="EMBL" id="AE000511">
    <property type="protein sequence ID" value="AAD08405.1"/>
    <property type="molecule type" value="Genomic_DNA"/>
</dbReference>
<dbReference type="PIR" id="E64690">
    <property type="entry name" value="E64690"/>
</dbReference>
<dbReference type="RefSeq" id="NP_208157.1">
    <property type="nucleotide sequence ID" value="NC_000915.1"/>
</dbReference>
<dbReference type="RefSeq" id="WP_001169789.1">
    <property type="nucleotide sequence ID" value="NC_018939.1"/>
</dbReference>
<dbReference type="SMR" id="O25918"/>
<dbReference type="IntAct" id="O25918">
    <property type="interactions" value="1"/>
</dbReference>
<dbReference type="STRING" id="85962.HP_1365"/>
<dbReference type="PaxDb" id="85962-C694_07045"/>
<dbReference type="EnsemblBacteria" id="AAD08405">
    <property type="protein sequence ID" value="AAD08405"/>
    <property type="gene ID" value="HP_1365"/>
</dbReference>
<dbReference type="KEGG" id="heo:C694_07045"/>
<dbReference type="KEGG" id="hpy:HP_1365"/>
<dbReference type="PATRIC" id="fig|85962.47.peg.1462"/>
<dbReference type="eggNOG" id="COG0745">
    <property type="taxonomic scope" value="Bacteria"/>
</dbReference>
<dbReference type="InParanoid" id="O25918"/>
<dbReference type="OrthoDB" id="8912111at2"/>
<dbReference type="PhylomeDB" id="O25918"/>
<dbReference type="Proteomes" id="UP000000429">
    <property type="component" value="Chromosome"/>
</dbReference>
<dbReference type="GO" id="GO:0005829">
    <property type="term" value="C:cytosol"/>
    <property type="evidence" value="ECO:0000318"/>
    <property type="project" value="GO_Central"/>
</dbReference>
<dbReference type="GO" id="GO:0032993">
    <property type="term" value="C:protein-DNA complex"/>
    <property type="evidence" value="ECO:0000318"/>
    <property type="project" value="GO_Central"/>
</dbReference>
<dbReference type="GO" id="GO:0000156">
    <property type="term" value="F:phosphorelay response regulator activity"/>
    <property type="evidence" value="ECO:0000318"/>
    <property type="project" value="GO_Central"/>
</dbReference>
<dbReference type="GO" id="GO:0000976">
    <property type="term" value="F:transcription cis-regulatory region binding"/>
    <property type="evidence" value="ECO:0000318"/>
    <property type="project" value="GO_Central"/>
</dbReference>
<dbReference type="GO" id="GO:0006355">
    <property type="term" value="P:regulation of DNA-templated transcription"/>
    <property type="evidence" value="ECO:0000318"/>
    <property type="project" value="GO_Central"/>
</dbReference>
<dbReference type="CDD" id="cd00383">
    <property type="entry name" value="trans_reg_C"/>
    <property type="match status" value="1"/>
</dbReference>
<dbReference type="FunFam" id="1.10.10.10:FF:000974">
    <property type="entry name" value="Two-component response regulator"/>
    <property type="match status" value="1"/>
</dbReference>
<dbReference type="Gene3D" id="3.40.50.2300">
    <property type="match status" value="1"/>
</dbReference>
<dbReference type="Gene3D" id="1.10.10.10">
    <property type="entry name" value="Winged helix-like DNA-binding domain superfamily/Winged helix DNA-binding domain"/>
    <property type="match status" value="1"/>
</dbReference>
<dbReference type="InterPro" id="IPR011006">
    <property type="entry name" value="CheY-like_superfamily"/>
</dbReference>
<dbReference type="InterPro" id="IPR001867">
    <property type="entry name" value="OmpR/PhoB-type_DNA-bd"/>
</dbReference>
<dbReference type="InterPro" id="IPR016032">
    <property type="entry name" value="Sig_transdc_resp-reg_C-effctor"/>
</dbReference>
<dbReference type="InterPro" id="IPR001789">
    <property type="entry name" value="Sig_transdc_resp-reg_receiver"/>
</dbReference>
<dbReference type="InterPro" id="IPR039420">
    <property type="entry name" value="WalR-like"/>
</dbReference>
<dbReference type="InterPro" id="IPR036388">
    <property type="entry name" value="WH-like_DNA-bd_sf"/>
</dbReference>
<dbReference type="PANTHER" id="PTHR48111:SF21">
    <property type="entry name" value="DNA-BINDING DUAL MASTER TRANSCRIPTIONAL REGULATOR RPAA"/>
    <property type="match status" value="1"/>
</dbReference>
<dbReference type="PANTHER" id="PTHR48111">
    <property type="entry name" value="REGULATOR OF RPOS"/>
    <property type="match status" value="1"/>
</dbReference>
<dbReference type="Pfam" id="PF00072">
    <property type="entry name" value="Response_reg"/>
    <property type="match status" value="1"/>
</dbReference>
<dbReference type="Pfam" id="PF00486">
    <property type="entry name" value="Trans_reg_C"/>
    <property type="match status" value="1"/>
</dbReference>
<dbReference type="SMART" id="SM00448">
    <property type="entry name" value="REC"/>
    <property type="match status" value="1"/>
</dbReference>
<dbReference type="SMART" id="SM00862">
    <property type="entry name" value="Trans_reg_C"/>
    <property type="match status" value="1"/>
</dbReference>
<dbReference type="SUPFAM" id="SSF46894">
    <property type="entry name" value="C-terminal effector domain of the bipartite response regulators"/>
    <property type="match status" value="1"/>
</dbReference>
<dbReference type="SUPFAM" id="SSF52172">
    <property type="entry name" value="CheY-like"/>
    <property type="match status" value="1"/>
</dbReference>
<dbReference type="PROSITE" id="PS51755">
    <property type="entry name" value="OMPR_PHOB"/>
    <property type="match status" value="1"/>
</dbReference>
<dbReference type="PROSITE" id="PS50110">
    <property type="entry name" value="RESPONSE_REGULATORY"/>
    <property type="match status" value="1"/>
</dbReference>
<comment type="function">
    <text evidence="3 4">Member of the two-component regulatory system CrdR/CrdS that induces the transcriptional induction of the copper resistance determinant CrdA (PubMed:12933888). Upon phosphorylation by CrdS, functions as a transcriptional regulator by direct binding to promoter regions of target genes including the crdA promoter or nitric oxide-responsive gene promoters (PubMed:26082024).</text>
</comment>
<comment type="PTM">
    <text evidence="6">Phosphorylated by CrdS.</text>
</comment>
<comment type="disruption phenotype">
    <text evidence="3 4">Deletion mutant is not able to colonize the stomach in mice (PubMed:12933888). Also shows a significant loss of viability upon exposure to nitric oxide (PubMed:26082024).</text>
</comment>
<proteinExistence type="inferred from homology"/>
<keyword id="KW-0238">DNA-binding</keyword>
<keyword id="KW-0597">Phosphoprotein</keyword>
<keyword id="KW-1185">Reference proteome</keyword>
<keyword id="KW-0804">Transcription</keyword>
<keyword id="KW-0805">Transcription regulation</keyword>
<keyword id="KW-0902">Two-component regulatory system</keyword>
<reference key="1">
    <citation type="journal article" date="1997" name="Nature">
        <title>The complete genome sequence of the gastric pathogen Helicobacter pylori.</title>
        <authorList>
            <person name="Tomb J.-F."/>
            <person name="White O."/>
            <person name="Kerlavage A.R."/>
            <person name="Clayton R.A."/>
            <person name="Sutton G.G."/>
            <person name="Fleischmann R.D."/>
            <person name="Ketchum K.A."/>
            <person name="Klenk H.-P."/>
            <person name="Gill S.R."/>
            <person name="Dougherty B.A."/>
            <person name="Nelson K.E."/>
            <person name="Quackenbush J."/>
            <person name="Zhou L."/>
            <person name="Kirkness E.F."/>
            <person name="Peterson S.N."/>
            <person name="Loftus B.J."/>
            <person name="Richardson D.L."/>
            <person name="Dodson R.J."/>
            <person name="Khalak H.G."/>
            <person name="Glodek A."/>
            <person name="McKenney K."/>
            <person name="FitzGerald L.M."/>
            <person name="Lee N."/>
            <person name="Adams M.D."/>
            <person name="Hickey E.K."/>
            <person name="Berg D.E."/>
            <person name="Gocayne J.D."/>
            <person name="Utterback T.R."/>
            <person name="Peterson J.D."/>
            <person name="Kelley J.M."/>
            <person name="Cotton M.D."/>
            <person name="Weidman J.F."/>
            <person name="Fujii C."/>
            <person name="Bowman C."/>
            <person name="Watthey L."/>
            <person name="Wallin E."/>
            <person name="Hayes W.S."/>
            <person name="Borodovsky M."/>
            <person name="Karp P.D."/>
            <person name="Smith H.O."/>
            <person name="Fraser C.M."/>
            <person name="Venter J.C."/>
        </authorList>
    </citation>
    <scope>NUCLEOTIDE SEQUENCE [LARGE SCALE GENOMIC DNA]</scope>
    <source>
        <strain>ATCC 700392 / 26695</strain>
    </source>
</reference>
<reference key="2">
    <citation type="journal article" date="2003" name="Infect. Immun.">
        <title>Two-component systems of Helicobacter pylori contribute to virulence in a mouse infection model.</title>
        <authorList>
            <person name="Panthel K."/>
            <person name="Dietz P."/>
            <person name="Haas R."/>
            <person name="Beier D."/>
        </authorList>
    </citation>
    <scope>DISRUPTION PHENOTYPE</scope>
</reference>
<reference key="3">
    <citation type="journal article" date="2005" name="J. Bacteriol.">
        <title>The Helicobacter pylori CrdRS two-component regulation system (HP1364/HP1365) is required for copper-mediated induction of the copper resistance determinant CrdA.</title>
        <authorList>
            <person name="Waidner B."/>
            <person name="Melchers K."/>
            <person name="Staehler F.N."/>
            <person name="Kist M."/>
            <person name="Bereswill S."/>
        </authorList>
    </citation>
    <scope>FUNCTION</scope>
</reference>
<reference key="4">
    <citation type="journal article" date="2015" name="Mol. Microbiol.">
        <title>The CrdRS two-component system in Helicobacter pylori responds to nitrosative stress.</title>
        <authorList>
            <person name="Hung C.L."/>
            <person name="Cheng H.H."/>
            <person name="Hsieh W.C."/>
            <person name="Tsai Z.T."/>
            <person name="Tsai H.K."/>
            <person name="Chu C.H."/>
            <person name="Hsieh W.P."/>
            <person name="Chen Y.F."/>
            <person name="Tsou Y."/>
            <person name="Lai C.H."/>
            <person name="Wang W.C."/>
        </authorList>
    </citation>
    <scope>FUNCTION</scope>
    <scope>DISRUPTION PHENOTYPE</scope>
</reference>
<sequence>MQKKIFLLEDDYLLSESVKEFLEHLGYEVFCAFNGKEAYERLSVERFNLLLLDVQVPEMNSLELFKRIKNDFLISTPVIFITALQDNATLKNAFNLGASDYLKKPFDLDELEARIKRFFNDDPIEIMPNIFYHQNCLSVRGKKEILPPKTAQLLEYFLEHKGQIISSQALENNLWEQAIDDSTLRTYIKVLRKLLGKNCIETHKGVGYRFNPL</sequence>
<protein>
    <recommendedName>
        <fullName evidence="5">Transcriptional regulatory protein CrdR</fullName>
    </recommendedName>
</protein>
<feature type="chain" id="PRO_0000448705" description="Transcriptional regulatory protein CrdR">
    <location>
        <begin position="1"/>
        <end position="213"/>
    </location>
</feature>
<feature type="domain" description="Response regulatory" evidence="1">
    <location>
        <begin position="4"/>
        <end position="119"/>
    </location>
</feature>
<feature type="DNA-binding region" description="OmpR/PhoB-type" evidence="2">
    <location>
        <begin position="121"/>
        <end position="212"/>
    </location>
</feature>
<feature type="modified residue" description="4-aspartylphosphate" evidence="1">
    <location>
        <position position="53"/>
    </location>
</feature>
<evidence type="ECO:0000255" key="1">
    <source>
        <dbReference type="PROSITE-ProRule" id="PRU00169"/>
    </source>
</evidence>
<evidence type="ECO:0000255" key="2">
    <source>
        <dbReference type="PROSITE-ProRule" id="PRU01091"/>
    </source>
</evidence>
<evidence type="ECO:0000269" key="3">
    <source>
    </source>
</evidence>
<evidence type="ECO:0000269" key="4">
    <source>
    </source>
</evidence>
<evidence type="ECO:0000303" key="5">
    <source>
    </source>
</evidence>
<evidence type="ECO:0000305" key="6"/>